<dbReference type="EMBL" id="AM260522">
    <property type="protein sequence ID" value="CAK00399.1"/>
    <property type="molecule type" value="Genomic_DNA"/>
</dbReference>
<dbReference type="RefSeq" id="WP_011578482.1">
    <property type="nucleotide sequence ID" value="NC_008229.1"/>
</dbReference>
<dbReference type="SMR" id="Q17VC7"/>
<dbReference type="STRING" id="382638.Hac_1697"/>
<dbReference type="GeneID" id="31758942"/>
<dbReference type="KEGG" id="hac:Hac_1697"/>
<dbReference type="eggNOG" id="COG0234">
    <property type="taxonomic scope" value="Bacteria"/>
</dbReference>
<dbReference type="HOGENOM" id="CLU_132825_2_0_7"/>
<dbReference type="OrthoDB" id="9806791at2"/>
<dbReference type="BioCyc" id="HACI382638:HAC_RS07220-MONOMER"/>
<dbReference type="Proteomes" id="UP000000775">
    <property type="component" value="Chromosome"/>
</dbReference>
<dbReference type="GO" id="GO:0005737">
    <property type="term" value="C:cytoplasm"/>
    <property type="evidence" value="ECO:0007669"/>
    <property type="project" value="UniProtKB-SubCell"/>
</dbReference>
<dbReference type="GO" id="GO:0005524">
    <property type="term" value="F:ATP binding"/>
    <property type="evidence" value="ECO:0007669"/>
    <property type="project" value="InterPro"/>
</dbReference>
<dbReference type="GO" id="GO:0046872">
    <property type="term" value="F:metal ion binding"/>
    <property type="evidence" value="ECO:0007669"/>
    <property type="project" value="TreeGrafter"/>
</dbReference>
<dbReference type="GO" id="GO:0044183">
    <property type="term" value="F:protein folding chaperone"/>
    <property type="evidence" value="ECO:0007669"/>
    <property type="project" value="InterPro"/>
</dbReference>
<dbReference type="GO" id="GO:0051087">
    <property type="term" value="F:protein-folding chaperone binding"/>
    <property type="evidence" value="ECO:0007669"/>
    <property type="project" value="TreeGrafter"/>
</dbReference>
<dbReference type="GO" id="GO:0051082">
    <property type="term" value="F:unfolded protein binding"/>
    <property type="evidence" value="ECO:0007669"/>
    <property type="project" value="TreeGrafter"/>
</dbReference>
<dbReference type="GO" id="GO:0051085">
    <property type="term" value="P:chaperone cofactor-dependent protein refolding"/>
    <property type="evidence" value="ECO:0007669"/>
    <property type="project" value="TreeGrafter"/>
</dbReference>
<dbReference type="CDD" id="cd00320">
    <property type="entry name" value="cpn10"/>
    <property type="match status" value="1"/>
</dbReference>
<dbReference type="FunFam" id="2.30.33.40:FF:000001">
    <property type="entry name" value="10 kDa chaperonin"/>
    <property type="match status" value="1"/>
</dbReference>
<dbReference type="Gene3D" id="2.30.33.40">
    <property type="entry name" value="GroES chaperonin"/>
    <property type="match status" value="1"/>
</dbReference>
<dbReference type="HAMAP" id="MF_00580">
    <property type="entry name" value="CH10"/>
    <property type="match status" value="1"/>
</dbReference>
<dbReference type="InterPro" id="IPR020818">
    <property type="entry name" value="Chaperonin_GroES"/>
</dbReference>
<dbReference type="InterPro" id="IPR037124">
    <property type="entry name" value="Chaperonin_GroES_sf"/>
</dbReference>
<dbReference type="InterPro" id="IPR018369">
    <property type="entry name" value="Chaprnonin_Cpn10_CS"/>
</dbReference>
<dbReference type="InterPro" id="IPR011032">
    <property type="entry name" value="GroES-like_sf"/>
</dbReference>
<dbReference type="NCBIfam" id="NF001535">
    <property type="entry name" value="PRK00364.3-1"/>
    <property type="match status" value="1"/>
</dbReference>
<dbReference type="NCBIfam" id="NF001537">
    <property type="entry name" value="PRK00364.3-3"/>
    <property type="match status" value="1"/>
</dbReference>
<dbReference type="PANTHER" id="PTHR10772">
    <property type="entry name" value="10 KDA HEAT SHOCK PROTEIN"/>
    <property type="match status" value="1"/>
</dbReference>
<dbReference type="PANTHER" id="PTHR10772:SF58">
    <property type="entry name" value="CO-CHAPERONIN GROES"/>
    <property type="match status" value="1"/>
</dbReference>
<dbReference type="Pfam" id="PF00166">
    <property type="entry name" value="Cpn10"/>
    <property type="match status" value="1"/>
</dbReference>
<dbReference type="PRINTS" id="PR00297">
    <property type="entry name" value="CHAPERONIN10"/>
</dbReference>
<dbReference type="SMART" id="SM00883">
    <property type="entry name" value="Cpn10"/>
    <property type="match status" value="1"/>
</dbReference>
<dbReference type="SUPFAM" id="SSF50129">
    <property type="entry name" value="GroES-like"/>
    <property type="match status" value="1"/>
</dbReference>
<dbReference type="PROSITE" id="PS00681">
    <property type="entry name" value="CHAPERONINS_CPN10"/>
    <property type="match status" value="1"/>
</dbReference>
<keyword id="KW-0143">Chaperone</keyword>
<keyword id="KW-0963">Cytoplasm</keyword>
<feature type="chain" id="PRO_1000025272" description="Co-chaperonin GroES">
    <location>
        <begin position="1"/>
        <end position="118"/>
    </location>
</feature>
<organism>
    <name type="scientific">Helicobacter acinonychis (strain Sheeba)</name>
    <dbReference type="NCBI Taxonomy" id="382638"/>
    <lineage>
        <taxon>Bacteria</taxon>
        <taxon>Pseudomonadati</taxon>
        <taxon>Campylobacterota</taxon>
        <taxon>Epsilonproteobacteria</taxon>
        <taxon>Campylobacterales</taxon>
        <taxon>Helicobacteraceae</taxon>
        <taxon>Helicobacter</taxon>
    </lineage>
</organism>
<gene>
    <name evidence="1" type="primary">groES</name>
    <name evidence="1" type="synonym">groS</name>
    <name type="ordered locus">Hac_1697</name>
</gene>
<name>CH10_HELAH</name>
<protein>
    <recommendedName>
        <fullName evidence="1">Co-chaperonin GroES</fullName>
    </recommendedName>
    <alternativeName>
        <fullName evidence="1">10 kDa chaperonin</fullName>
    </alternativeName>
    <alternativeName>
        <fullName evidence="1">Chaperonin-10</fullName>
        <shortName evidence="1">Cpn10</shortName>
    </alternativeName>
</protein>
<sequence length="118" mass="13048">MKFQPLGERVLVERLEEENKTSSGIIIPDNAKEKPLMGVVKAVSHKISEGCKCVKEGDVIAFGKYKGTEIVLDGTEYMVLELEDILGIVNAGSCCHANSHDHKDHKHAEACCHDHKKH</sequence>
<comment type="function">
    <text evidence="1">Together with the chaperonin GroEL, plays an essential role in assisting protein folding. The GroEL-GroES system forms a nano-cage that allows encapsulation of the non-native substrate proteins and provides a physical environment optimized to promote and accelerate protein folding. GroES binds to the apical surface of the GroEL ring, thereby capping the opening of the GroEL channel.</text>
</comment>
<comment type="subunit">
    <text evidence="1">Heptamer of 7 subunits arranged in a ring. Interacts with the chaperonin GroEL.</text>
</comment>
<comment type="subcellular location">
    <subcellularLocation>
        <location evidence="1">Cytoplasm</location>
    </subcellularLocation>
</comment>
<comment type="similarity">
    <text evidence="1">Belongs to the GroES chaperonin family.</text>
</comment>
<accession>Q17VC7</accession>
<proteinExistence type="inferred from homology"/>
<evidence type="ECO:0000255" key="1">
    <source>
        <dbReference type="HAMAP-Rule" id="MF_00580"/>
    </source>
</evidence>
<reference key="1">
    <citation type="journal article" date="2006" name="PLoS Genet.">
        <title>Who ate whom? Adaptive Helicobacter genomic changes that accompanied a host jump from early humans to large felines.</title>
        <authorList>
            <person name="Eppinger M."/>
            <person name="Baar C."/>
            <person name="Linz B."/>
            <person name="Raddatz G."/>
            <person name="Lanz C."/>
            <person name="Keller H."/>
            <person name="Morelli G."/>
            <person name="Gressmann H."/>
            <person name="Achtman M."/>
            <person name="Schuster S.C."/>
        </authorList>
    </citation>
    <scope>NUCLEOTIDE SEQUENCE [LARGE SCALE GENOMIC DNA]</scope>
    <source>
        <strain>Sheeba</strain>
    </source>
</reference>